<gene>
    <name evidence="1" type="primary">dapB</name>
    <name type="ordered locus">Ssed_3405</name>
</gene>
<keyword id="KW-0028">Amino-acid biosynthesis</keyword>
<keyword id="KW-0963">Cytoplasm</keyword>
<keyword id="KW-0220">Diaminopimelate biosynthesis</keyword>
<keyword id="KW-0457">Lysine biosynthesis</keyword>
<keyword id="KW-0520">NAD</keyword>
<keyword id="KW-0521">NADP</keyword>
<keyword id="KW-0560">Oxidoreductase</keyword>
<keyword id="KW-1185">Reference proteome</keyword>
<reference key="1">
    <citation type="submission" date="2007-08" db="EMBL/GenBank/DDBJ databases">
        <title>Complete sequence of Shewanella sediminis HAW-EB3.</title>
        <authorList>
            <consortium name="US DOE Joint Genome Institute"/>
            <person name="Copeland A."/>
            <person name="Lucas S."/>
            <person name="Lapidus A."/>
            <person name="Barry K."/>
            <person name="Glavina del Rio T."/>
            <person name="Dalin E."/>
            <person name="Tice H."/>
            <person name="Pitluck S."/>
            <person name="Chertkov O."/>
            <person name="Brettin T."/>
            <person name="Bruce D."/>
            <person name="Detter J.C."/>
            <person name="Han C."/>
            <person name="Schmutz J."/>
            <person name="Larimer F."/>
            <person name="Land M."/>
            <person name="Hauser L."/>
            <person name="Kyrpides N."/>
            <person name="Kim E."/>
            <person name="Zhao J.-S."/>
            <person name="Richardson P."/>
        </authorList>
    </citation>
    <scope>NUCLEOTIDE SEQUENCE [LARGE SCALE GENOMIC DNA]</scope>
    <source>
        <strain>HAW-EB3</strain>
    </source>
</reference>
<proteinExistence type="inferred from homology"/>
<sequence>MMSEPVRVAITGGSGRMGRTLIEAARQQPSILLGAAIERAGSTLIGVDAGELAGVGAMNVAITDSLDKVVDDFDILIDFTSPEASIVHTDWCARNGKAIVIGTTGFNHAQKEQISAYSESTPIVMAPNMAVGVNLMWKLLEVAAKVMGDYTDIEIIEGHHRYKKDAPSGTALKMGEVIAEALGRDLEKCAEYGREGITGERDRETIGFSTIRAGDLVGEHTAMFADIGERIEITHKASSRMTFANGAMRAASWLAEEDPGLYDMQQVLGLN</sequence>
<dbReference type="EC" id="1.17.1.8" evidence="1"/>
<dbReference type="EMBL" id="CP000821">
    <property type="protein sequence ID" value="ABV38009.1"/>
    <property type="molecule type" value="Genomic_DNA"/>
</dbReference>
<dbReference type="SMR" id="A8FYT6"/>
<dbReference type="STRING" id="425104.Ssed_3405"/>
<dbReference type="KEGG" id="sse:Ssed_3405"/>
<dbReference type="eggNOG" id="COG0289">
    <property type="taxonomic scope" value="Bacteria"/>
</dbReference>
<dbReference type="HOGENOM" id="CLU_047479_2_1_6"/>
<dbReference type="UniPathway" id="UPA00034">
    <property type="reaction ID" value="UER00018"/>
</dbReference>
<dbReference type="Proteomes" id="UP000002015">
    <property type="component" value="Chromosome"/>
</dbReference>
<dbReference type="GO" id="GO:0005829">
    <property type="term" value="C:cytosol"/>
    <property type="evidence" value="ECO:0007669"/>
    <property type="project" value="TreeGrafter"/>
</dbReference>
<dbReference type="GO" id="GO:0008839">
    <property type="term" value="F:4-hydroxy-tetrahydrodipicolinate reductase"/>
    <property type="evidence" value="ECO:0007669"/>
    <property type="project" value="UniProtKB-EC"/>
</dbReference>
<dbReference type="GO" id="GO:0051287">
    <property type="term" value="F:NAD binding"/>
    <property type="evidence" value="ECO:0007669"/>
    <property type="project" value="UniProtKB-UniRule"/>
</dbReference>
<dbReference type="GO" id="GO:0050661">
    <property type="term" value="F:NADP binding"/>
    <property type="evidence" value="ECO:0007669"/>
    <property type="project" value="UniProtKB-UniRule"/>
</dbReference>
<dbReference type="GO" id="GO:0016726">
    <property type="term" value="F:oxidoreductase activity, acting on CH or CH2 groups, NAD or NADP as acceptor"/>
    <property type="evidence" value="ECO:0007669"/>
    <property type="project" value="UniProtKB-UniRule"/>
</dbReference>
<dbReference type="GO" id="GO:0019877">
    <property type="term" value="P:diaminopimelate biosynthetic process"/>
    <property type="evidence" value="ECO:0007669"/>
    <property type="project" value="UniProtKB-UniRule"/>
</dbReference>
<dbReference type="GO" id="GO:0009089">
    <property type="term" value="P:lysine biosynthetic process via diaminopimelate"/>
    <property type="evidence" value="ECO:0007669"/>
    <property type="project" value="UniProtKB-UniRule"/>
</dbReference>
<dbReference type="CDD" id="cd02274">
    <property type="entry name" value="DHDPR_N"/>
    <property type="match status" value="1"/>
</dbReference>
<dbReference type="FunFam" id="3.30.360.10:FF:000004">
    <property type="entry name" value="4-hydroxy-tetrahydrodipicolinate reductase"/>
    <property type="match status" value="1"/>
</dbReference>
<dbReference type="FunFam" id="3.40.50.720:FF:000048">
    <property type="entry name" value="4-hydroxy-tetrahydrodipicolinate reductase"/>
    <property type="match status" value="1"/>
</dbReference>
<dbReference type="Gene3D" id="3.30.360.10">
    <property type="entry name" value="Dihydrodipicolinate Reductase, domain 2"/>
    <property type="match status" value="1"/>
</dbReference>
<dbReference type="Gene3D" id="3.40.50.720">
    <property type="entry name" value="NAD(P)-binding Rossmann-like Domain"/>
    <property type="match status" value="1"/>
</dbReference>
<dbReference type="HAMAP" id="MF_00102">
    <property type="entry name" value="DapB"/>
    <property type="match status" value="1"/>
</dbReference>
<dbReference type="InterPro" id="IPR022663">
    <property type="entry name" value="DapB_C"/>
</dbReference>
<dbReference type="InterPro" id="IPR000846">
    <property type="entry name" value="DapB_N"/>
</dbReference>
<dbReference type="InterPro" id="IPR022664">
    <property type="entry name" value="DapB_N_CS"/>
</dbReference>
<dbReference type="InterPro" id="IPR023940">
    <property type="entry name" value="DHDPR_bac"/>
</dbReference>
<dbReference type="InterPro" id="IPR036291">
    <property type="entry name" value="NAD(P)-bd_dom_sf"/>
</dbReference>
<dbReference type="NCBIfam" id="TIGR00036">
    <property type="entry name" value="dapB"/>
    <property type="match status" value="1"/>
</dbReference>
<dbReference type="PANTHER" id="PTHR20836:SF0">
    <property type="entry name" value="4-HYDROXY-TETRAHYDRODIPICOLINATE REDUCTASE 1, CHLOROPLASTIC-RELATED"/>
    <property type="match status" value="1"/>
</dbReference>
<dbReference type="PANTHER" id="PTHR20836">
    <property type="entry name" value="DIHYDRODIPICOLINATE REDUCTASE"/>
    <property type="match status" value="1"/>
</dbReference>
<dbReference type="Pfam" id="PF05173">
    <property type="entry name" value="DapB_C"/>
    <property type="match status" value="1"/>
</dbReference>
<dbReference type="Pfam" id="PF01113">
    <property type="entry name" value="DapB_N"/>
    <property type="match status" value="1"/>
</dbReference>
<dbReference type="PIRSF" id="PIRSF000161">
    <property type="entry name" value="DHPR"/>
    <property type="match status" value="1"/>
</dbReference>
<dbReference type="SUPFAM" id="SSF55347">
    <property type="entry name" value="Glyceraldehyde-3-phosphate dehydrogenase-like, C-terminal domain"/>
    <property type="match status" value="1"/>
</dbReference>
<dbReference type="SUPFAM" id="SSF51735">
    <property type="entry name" value="NAD(P)-binding Rossmann-fold domains"/>
    <property type="match status" value="1"/>
</dbReference>
<dbReference type="PROSITE" id="PS01298">
    <property type="entry name" value="DAPB"/>
    <property type="match status" value="1"/>
</dbReference>
<comment type="function">
    <text evidence="1">Catalyzes the conversion of 4-hydroxy-tetrahydrodipicolinate (HTPA) to tetrahydrodipicolinate.</text>
</comment>
<comment type="catalytic activity">
    <reaction evidence="1">
        <text>(S)-2,3,4,5-tetrahydrodipicolinate + NAD(+) + H2O = (2S,4S)-4-hydroxy-2,3,4,5-tetrahydrodipicolinate + NADH + H(+)</text>
        <dbReference type="Rhea" id="RHEA:35323"/>
        <dbReference type="ChEBI" id="CHEBI:15377"/>
        <dbReference type="ChEBI" id="CHEBI:15378"/>
        <dbReference type="ChEBI" id="CHEBI:16845"/>
        <dbReference type="ChEBI" id="CHEBI:57540"/>
        <dbReference type="ChEBI" id="CHEBI:57945"/>
        <dbReference type="ChEBI" id="CHEBI:67139"/>
        <dbReference type="EC" id="1.17.1.8"/>
    </reaction>
</comment>
<comment type="catalytic activity">
    <reaction evidence="1">
        <text>(S)-2,3,4,5-tetrahydrodipicolinate + NADP(+) + H2O = (2S,4S)-4-hydroxy-2,3,4,5-tetrahydrodipicolinate + NADPH + H(+)</text>
        <dbReference type="Rhea" id="RHEA:35331"/>
        <dbReference type="ChEBI" id="CHEBI:15377"/>
        <dbReference type="ChEBI" id="CHEBI:15378"/>
        <dbReference type="ChEBI" id="CHEBI:16845"/>
        <dbReference type="ChEBI" id="CHEBI:57783"/>
        <dbReference type="ChEBI" id="CHEBI:58349"/>
        <dbReference type="ChEBI" id="CHEBI:67139"/>
        <dbReference type="EC" id="1.17.1.8"/>
    </reaction>
</comment>
<comment type="pathway">
    <text evidence="1">Amino-acid biosynthesis; L-lysine biosynthesis via DAP pathway; (S)-tetrahydrodipicolinate from L-aspartate: step 4/4.</text>
</comment>
<comment type="subcellular location">
    <subcellularLocation>
        <location evidence="1">Cytoplasm</location>
    </subcellularLocation>
</comment>
<comment type="similarity">
    <text evidence="1">Belongs to the DapB family.</text>
</comment>
<comment type="caution">
    <text evidence="2">Was originally thought to be a dihydrodipicolinate reductase (DHDPR), catalyzing the conversion of dihydrodipicolinate to tetrahydrodipicolinate. However, it was shown in E.coli that the substrate of the enzymatic reaction is not dihydrodipicolinate (DHDP) but in fact (2S,4S)-4-hydroxy-2,3,4,5-tetrahydrodipicolinic acid (HTPA), the product released by the DapA-catalyzed reaction.</text>
</comment>
<protein>
    <recommendedName>
        <fullName evidence="1">4-hydroxy-tetrahydrodipicolinate reductase</fullName>
        <shortName evidence="1">HTPA reductase</shortName>
        <ecNumber evidence="1">1.17.1.8</ecNumber>
    </recommendedName>
</protein>
<evidence type="ECO:0000255" key="1">
    <source>
        <dbReference type="HAMAP-Rule" id="MF_00102"/>
    </source>
</evidence>
<evidence type="ECO:0000305" key="2"/>
<name>DAPB_SHESH</name>
<feature type="chain" id="PRO_1000202818" description="4-hydroxy-tetrahydrodipicolinate reductase">
    <location>
        <begin position="1"/>
        <end position="271"/>
    </location>
</feature>
<feature type="active site" description="Proton donor/acceptor" evidence="1">
    <location>
        <position position="159"/>
    </location>
</feature>
<feature type="active site" description="Proton donor" evidence="1">
    <location>
        <position position="163"/>
    </location>
</feature>
<feature type="binding site" evidence="1">
    <location>
        <begin position="12"/>
        <end position="17"/>
    </location>
    <ligand>
        <name>NAD(+)</name>
        <dbReference type="ChEBI" id="CHEBI:57540"/>
    </ligand>
</feature>
<feature type="binding site" evidence="1">
    <location>
        <position position="38"/>
    </location>
    <ligand>
        <name>NAD(+)</name>
        <dbReference type="ChEBI" id="CHEBI:57540"/>
    </ligand>
</feature>
<feature type="binding site" evidence="1">
    <location>
        <position position="39"/>
    </location>
    <ligand>
        <name>NADP(+)</name>
        <dbReference type="ChEBI" id="CHEBI:58349"/>
    </ligand>
</feature>
<feature type="binding site" evidence="1">
    <location>
        <begin position="102"/>
        <end position="104"/>
    </location>
    <ligand>
        <name>NAD(+)</name>
        <dbReference type="ChEBI" id="CHEBI:57540"/>
    </ligand>
</feature>
<feature type="binding site" evidence="1">
    <location>
        <begin position="126"/>
        <end position="129"/>
    </location>
    <ligand>
        <name>NAD(+)</name>
        <dbReference type="ChEBI" id="CHEBI:57540"/>
    </ligand>
</feature>
<feature type="binding site" evidence="1">
    <location>
        <position position="160"/>
    </location>
    <ligand>
        <name>(S)-2,3,4,5-tetrahydrodipicolinate</name>
        <dbReference type="ChEBI" id="CHEBI:16845"/>
    </ligand>
</feature>
<feature type="binding site" evidence="1">
    <location>
        <begin position="169"/>
        <end position="170"/>
    </location>
    <ligand>
        <name>(S)-2,3,4,5-tetrahydrodipicolinate</name>
        <dbReference type="ChEBI" id="CHEBI:16845"/>
    </ligand>
</feature>
<organism>
    <name type="scientific">Shewanella sediminis (strain HAW-EB3)</name>
    <dbReference type="NCBI Taxonomy" id="425104"/>
    <lineage>
        <taxon>Bacteria</taxon>
        <taxon>Pseudomonadati</taxon>
        <taxon>Pseudomonadota</taxon>
        <taxon>Gammaproteobacteria</taxon>
        <taxon>Alteromonadales</taxon>
        <taxon>Shewanellaceae</taxon>
        <taxon>Shewanella</taxon>
    </lineage>
</organism>
<accession>A8FYT6</accession>